<dbReference type="EC" id="2.3.2.23" evidence="9"/>
<dbReference type="EMBL" id="X17493">
    <property type="protein sequence ID" value="CAA35528.1"/>
    <property type="molecule type" value="Genomic_DNA"/>
</dbReference>
<dbReference type="EMBL" id="X76294">
    <property type="protein sequence ID" value="CAA53942.1"/>
    <property type="molecule type" value="Genomic_DNA"/>
</dbReference>
<dbReference type="EMBL" id="Z35951">
    <property type="protein sequence ID" value="CAA85027.1"/>
    <property type="molecule type" value="Genomic_DNA"/>
</dbReference>
<dbReference type="EMBL" id="BK006936">
    <property type="protein sequence ID" value="DAA07201.1"/>
    <property type="molecule type" value="Genomic_DNA"/>
</dbReference>
<dbReference type="PIR" id="S22857">
    <property type="entry name" value="S22857"/>
</dbReference>
<dbReference type="RefSeq" id="NP_009638.1">
    <property type="nucleotide sequence ID" value="NM_001178430.1"/>
</dbReference>
<dbReference type="PDB" id="1QCQ">
    <property type="method" value="X-ray"/>
    <property type="resolution" value="2.70 A"/>
    <property type="chains" value="A=1-148"/>
</dbReference>
<dbReference type="PDB" id="5AIE">
    <property type="method" value="X-ray"/>
    <property type="resolution" value="2.80 A"/>
    <property type="chains" value="B=1-148"/>
</dbReference>
<dbReference type="PDB" id="8J1R">
    <property type="method" value="EM"/>
    <property type="resolution" value="3.52 A"/>
    <property type="chains" value="C=1-148"/>
</dbReference>
<dbReference type="PDBsum" id="1QCQ"/>
<dbReference type="PDBsum" id="5AIE"/>
<dbReference type="PDBsum" id="8J1R"/>
<dbReference type="EMDB" id="EMD-35931"/>
<dbReference type="SMR" id="P15731"/>
<dbReference type="BioGRID" id="32786">
    <property type="interactions" value="479"/>
</dbReference>
<dbReference type="DIP" id="DIP-6596N"/>
<dbReference type="FunCoup" id="P15731">
    <property type="interactions" value="1089"/>
</dbReference>
<dbReference type="IntAct" id="P15731">
    <property type="interactions" value="23"/>
</dbReference>
<dbReference type="MINT" id="P15731"/>
<dbReference type="STRING" id="4932.YBR082C"/>
<dbReference type="iPTMnet" id="P15731"/>
<dbReference type="PaxDb" id="4932-YBR082C"/>
<dbReference type="PeptideAtlas" id="P15731"/>
<dbReference type="TopDownProteomics" id="P15731"/>
<dbReference type="EnsemblFungi" id="YBR082C_mRNA">
    <property type="protein sequence ID" value="YBR082C"/>
    <property type="gene ID" value="YBR082C"/>
</dbReference>
<dbReference type="GeneID" id="852376"/>
<dbReference type="KEGG" id="sce:YBR082C"/>
<dbReference type="AGR" id="SGD:S000000286"/>
<dbReference type="SGD" id="S000000286">
    <property type="gene designation" value="UBC4"/>
</dbReference>
<dbReference type="VEuPathDB" id="FungiDB:YBR082C"/>
<dbReference type="eggNOG" id="KOG0417">
    <property type="taxonomic scope" value="Eukaryota"/>
</dbReference>
<dbReference type="HOGENOM" id="CLU_030988_13_3_1"/>
<dbReference type="InParanoid" id="P15731"/>
<dbReference type="OMA" id="VHFTTRI"/>
<dbReference type="OrthoDB" id="7851174at2759"/>
<dbReference type="BioCyc" id="YEAST:G3O-29050-MONOMER"/>
<dbReference type="Reactome" id="R-SCE-8866652">
    <property type="pathway name" value="Synthesis of active ubiquitin: roles of E1 and E2 enzymes"/>
</dbReference>
<dbReference type="Reactome" id="R-SCE-8866654">
    <property type="pathway name" value="E3 ubiquitin ligases ubiquitinate target proteins"/>
</dbReference>
<dbReference type="Reactome" id="R-SCE-9033241">
    <property type="pathway name" value="Peroxisomal protein import"/>
</dbReference>
<dbReference type="Reactome" id="R-SCE-983168">
    <property type="pathway name" value="Antigen processing: Ubiquitination &amp; Proteasome degradation"/>
</dbReference>
<dbReference type="UniPathway" id="UPA00143"/>
<dbReference type="BioGRID-ORCS" id="852376">
    <property type="hits" value="8 hits in 10 CRISPR screens"/>
</dbReference>
<dbReference type="EvolutionaryTrace" id="P15731"/>
<dbReference type="PRO" id="PR:P15731"/>
<dbReference type="Proteomes" id="UP000002311">
    <property type="component" value="Chromosome II"/>
</dbReference>
<dbReference type="RNAct" id="P15731">
    <property type="molecule type" value="protein"/>
</dbReference>
<dbReference type="GO" id="GO:0005737">
    <property type="term" value="C:cytoplasm"/>
    <property type="evidence" value="ECO:0000314"/>
    <property type="project" value="SGD"/>
</dbReference>
<dbReference type="GO" id="GO:0005634">
    <property type="term" value="C:nucleus"/>
    <property type="evidence" value="ECO:0000314"/>
    <property type="project" value="SGD"/>
</dbReference>
<dbReference type="GO" id="GO:0005524">
    <property type="term" value="F:ATP binding"/>
    <property type="evidence" value="ECO:0007669"/>
    <property type="project" value="UniProtKB-KW"/>
</dbReference>
<dbReference type="GO" id="GO:0070628">
    <property type="term" value="F:proteasome binding"/>
    <property type="evidence" value="ECO:0000314"/>
    <property type="project" value="SGD"/>
</dbReference>
<dbReference type="GO" id="GO:0030674">
    <property type="term" value="F:protein-macromolecule adaptor activity"/>
    <property type="evidence" value="ECO:0000314"/>
    <property type="project" value="SGD"/>
</dbReference>
<dbReference type="GO" id="GO:0043130">
    <property type="term" value="F:ubiquitin binding"/>
    <property type="evidence" value="ECO:0000314"/>
    <property type="project" value="SGD"/>
</dbReference>
<dbReference type="GO" id="GO:0061631">
    <property type="term" value="F:ubiquitin conjugating enzyme activity"/>
    <property type="evidence" value="ECO:0000314"/>
    <property type="project" value="UniProtKB"/>
</dbReference>
<dbReference type="GO" id="GO:0004842">
    <property type="term" value="F:ubiquitin-protein transferase activity"/>
    <property type="evidence" value="ECO:0000314"/>
    <property type="project" value="SGD"/>
</dbReference>
<dbReference type="GO" id="GO:0034605">
    <property type="term" value="P:cellular response to heat"/>
    <property type="evidence" value="ECO:0000314"/>
    <property type="project" value="SGD"/>
</dbReference>
<dbReference type="GO" id="GO:0071629">
    <property type="term" value="P:cytoplasm protein quality control by the ubiquitin-proteasome system"/>
    <property type="evidence" value="ECO:0000315"/>
    <property type="project" value="SGD"/>
</dbReference>
<dbReference type="GO" id="GO:0072671">
    <property type="term" value="P:mitochondria-associated ubiquitin-dependent protein catabolic process"/>
    <property type="evidence" value="ECO:0000315"/>
    <property type="project" value="SGD"/>
</dbReference>
<dbReference type="GO" id="GO:0000209">
    <property type="term" value="P:protein polyubiquitination"/>
    <property type="evidence" value="ECO:0000315"/>
    <property type="project" value="UniProtKB"/>
</dbReference>
<dbReference type="GO" id="GO:0072344">
    <property type="term" value="P:rescue of stalled ribosome"/>
    <property type="evidence" value="ECO:0000315"/>
    <property type="project" value="UniProtKB"/>
</dbReference>
<dbReference type="GO" id="GO:1990116">
    <property type="term" value="P:ribosome-associated ubiquitin-dependent protein catabolic process"/>
    <property type="evidence" value="ECO:0000315"/>
    <property type="project" value="UniProtKB"/>
</dbReference>
<dbReference type="GO" id="GO:0006511">
    <property type="term" value="P:ubiquitin-dependent protein catabolic process"/>
    <property type="evidence" value="ECO:0000318"/>
    <property type="project" value="GO_Central"/>
</dbReference>
<dbReference type="GO" id="GO:0043162">
    <property type="term" value="P:ubiquitin-dependent protein catabolic process via the multivesicular body sorting pathway"/>
    <property type="evidence" value="ECO:0000315"/>
    <property type="project" value="SGD"/>
</dbReference>
<dbReference type="CDD" id="cd23792">
    <property type="entry name" value="UBCc_UBE2D"/>
    <property type="match status" value="1"/>
</dbReference>
<dbReference type="FunFam" id="3.10.110.10:FF:000001">
    <property type="entry name" value="Ubiquitin-conjugating enzyme 28, E2"/>
    <property type="match status" value="1"/>
</dbReference>
<dbReference type="Gene3D" id="3.10.110.10">
    <property type="entry name" value="Ubiquitin Conjugating Enzyme"/>
    <property type="match status" value="1"/>
</dbReference>
<dbReference type="InterPro" id="IPR000608">
    <property type="entry name" value="UBQ-conjugat_E2_core"/>
</dbReference>
<dbReference type="InterPro" id="IPR023313">
    <property type="entry name" value="UBQ-conjugating_AS"/>
</dbReference>
<dbReference type="InterPro" id="IPR016135">
    <property type="entry name" value="UBQ-conjugating_enzyme/RWD"/>
</dbReference>
<dbReference type="PANTHER" id="PTHR24068">
    <property type="entry name" value="UBIQUITIN-CONJUGATING ENZYME E2"/>
    <property type="match status" value="1"/>
</dbReference>
<dbReference type="Pfam" id="PF00179">
    <property type="entry name" value="UQ_con"/>
    <property type="match status" value="1"/>
</dbReference>
<dbReference type="SMART" id="SM00212">
    <property type="entry name" value="UBCc"/>
    <property type="match status" value="1"/>
</dbReference>
<dbReference type="SUPFAM" id="SSF54495">
    <property type="entry name" value="UBC-like"/>
    <property type="match status" value="1"/>
</dbReference>
<dbReference type="PROSITE" id="PS00183">
    <property type="entry name" value="UBC_1"/>
    <property type="match status" value="1"/>
</dbReference>
<dbReference type="PROSITE" id="PS50127">
    <property type="entry name" value="UBC_2"/>
    <property type="match status" value="1"/>
</dbReference>
<organism>
    <name type="scientific">Saccharomyces cerevisiae (strain ATCC 204508 / S288c)</name>
    <name type="common">Baker's yeast</name>
    <dbReference type="NCBI Taxonomy" id="559292"/>
    <lineage>
        <taxon>Eukaryota</taxon>
        <taxon>Fungi</taxon>
        <taxon>Dikarya</taxon>
        <taxon>Ascomycota</taxon>
        <taxon>Saccharomycotina</taxon>
        <taxon>Saccharomycetes</taxon>
        <taxon>Saccharomycetales</taxon>
        <taxon>Saccharomycetaceae</taxon>
        <taxon>Saccharomyces</taxon>
    </lineage>
</organism>
<proteinExistence type="evidence at protein level"/>
<name>UBC4_YEAST</name>
<accession>P15731</accession>
<accession>D6VQ81</accession>
<protein>
    <recommendedName>
        <fullName>Ubiquitin-conjugating enzyme E2 4</fullName>
        <ecNumber evidence="9">2.3.2.23</ecNumber>
    </recommendedName>
    <alternativeName>
        <fullName>E2 ubiquitin-conjugating enzyme 4</fullName>
    </alternativeName>
    <alternativeName>
        <fullName>Ubiquitin carrier protein 4</fullName>
    </alternativeName>
    <alternativeName>
        <fullName>Ubiquitin-protein ligase 4</fullName>
    </alternativeName>
</protein>
<comment type="function">
    <text evidence="6">E2 ubiquitin-conjugating enzyme that catalyzes the covalent attachment of ubiquitin to other proteins (PubMed:17550898). Mediates the selective degradation of short-lived and abnormal proteins (PubMed:17550898). Mediates ubiquitination of PEX5 (PubMed:17550898).</text>
</comment>
<comment type="catalytic activity">
    <reaction evidence="1 2 9">
        <text>S-ubiquitinyl-[E1 ubiquitin-activating enzyme]-L-cysteine + [E2 ubiquitin-conjugating enzyme]-L-cysteine = [E1 ubiquitin-activating enzyme]-L-cysteine + S-ubiquitinyl-[E2 ubiquitin-conjugating enzyme]-L-cysteine.</text>
        <dbReference type="EC" id="2.3.2.23"/>
    </reaction>
</comment>
<comment type="pathway">
    <text evidence="6">Protein modification; protein ubiquitination.</text>
</comment>
<comment type="subunit">
    <text evidence="4">Interacts with TUL1.</text>
</comment>
<comment type="interaction">
    <interactant intactId="EBI-19735">
        <id>P15731</id>
    </interactant>
    <interactant intactId="EBI-6379">
        <id>P38879</id>
        <label>EGD2</label>
    </interactant>
    <organismsDiffer>false</organismsDiffer>
    <experiments>2</experiments>
</comment>
<comment type="interaction">
    <interactant intactId="EBI-19735">
        <id>P15731</id>
    </interactant>
    <interactant intactId="EBI-12174">
        <id>P34909</id>
        <label>MOT2</label>
    </interactant>
    <organismsDiffer>false</organismsDiffer>
    <experiments>3</experiments>
</comment>
<comment type="induction">
    <text>By heat shock and cadmium.</text>
</comment>
<comment type="PTM">
    <text>The N-terminus is blocked.</text>
</comment>
<comment type="disruption phenotype">
    <text evidence="7">Defective activation of the ribosome quality control (RQC) pathway.</text>
</comment>
<comment type="miscellaneous">
    <text evidence="5">Present with 13500 molecules/cell in log phase SD medium.</text>
</comment>
<comment type="similarity">
    <text evidence="1">Belongs to the ubiquitin-conjugating enzyme family.</text>
</comment>
<evidence type="ECO:0000255" key="1">
    <source>
        <dbReference type="PROSITE-ProRule" id="PRU00388"/>
    </source>
</evidence>
<evidence type="ECO:0000255" key="2">
    <source>
        <dbReference type="PROSITE-ProRule" id="PRU10133"/>
    </source>
</evidence>
<evidence type="ECO:0000256" key="3">
    <source>
        <dbReference type="SAM" id="MobiDB-lite"/>
    </source>
</evidence>
<evidence type="ECO:0000269" key="4">
    <source>
    </source>
</evidence>
<evidence type="ECO:0000269" key="5">
    <source>
    </source>
</evidence>
<evidence type="ECO:0000269" key="6">
    <source>
    </source>
</evidence>
<evidence type="ECO:0000269" key="7">
    <source>
    </source>
</evidence>
<evidence type="ECO:0000303" key="8">
    <source>
    </source>
</evidence>
<evidence type="ECO:0000305" key="9">
    <source>
    </source>
</evidence>
<evidence type="ECO:0000312" key="10">
    <source>
        <dbReference type="SGD" id="S000000286"/>
    </source>
</evidence>
<evidence type="ECO:0007744" key="11">
    <source>
    </source>
</evidence>
<evidence type="ECO:0007744" key="12">
    <source>
    </source>
</evidence>
<evidence type="ECO:0007829" key="13">
    <source>
        <dbReference type="PDB" id="1QCQ"/>
    </source>
</evidence>
<evidence type="ECO:0007829" key="14">
    <source>
        <dbReference type="PDB" id="5AIE"/>
    </source>
</evidence>
<keyword id="KW-0002">3D-structure</keyword>
<keyword id="KW-0067">ATP-binding</keyword>
<keyword id="KW-0903">Direct protein sequencing</keyword>
<keyword id="KW-1017">Isopeptide bond</keyword>
<keyword id="KW-0547">Nucleotide-binding</keyword>
<keyword id="KW-0597">Phosphoprotein</keyword>
<keyword id="KW-1185">Reference proteome</keyword>
<keyword id="KW-0346">Stress response</keyword>
<keyword id="KW-0808">Transferase</keyword>
<keyword id="KW-0832">Ubl conjugation</keyword>
<keyword id="KW-0833">Ubl conjugation pathway</keyword>
<gene>
    <name evidence="8" type="primary">UBC4</name>
    <name evidence="10" type="ordered locus">YBR082C</name>
    <name type="ORF">YBR0745</name>
</gene>
<reference key="1">
    <citation type="journal article" date="1990" name="EMBO J.">
        <title>Ubiquitin-conjugating enzymes UBC4 and UBC5 mediate selective degradation of short-lived and abnormal proteins.</title>
        <authorList>
            <person name="Seufert W."/>
            <person name="Jentsch S."/>
        </authorList>
    </citation>
    <scope>NUCLEOTIDE SEQUENCE [GENOMIC DNA]</scope>
    <scope>PROTEIN SEQUENCE OF 40-64 AND 119-125</scope>
    <scope>CATALYTIC ACTIVITY</scope>
</reference>
<reference key="2">
    <citation type="journal article" date="1994" name="Yeast">
        <title>Sequence analysis of a 31 kb DNA fragment from the right arm of Saccharomyces cerevisiae chromosome II.</title>
        <authorList>
            <person name="van der Aart Q.J.M."/>
            <person name="Barthe C."/>
            <person name="Doignon F."/>
            <person name="Aigle M."/>
            <person name="Crouzet M."/>
            <person name="Steensma H.Y."/>
        </authorList>
    </citation>
    <scope>NUCLEOTIDE SEQUENCE [GENOMIC DNA]</scope>
    <source>
        <strain>ATCC 204508 / S288c</strain>
    </source>
</reference>
<reference key="3">
    <citation type="journal article" date="1994" name="EMBO J.">
        <title>Complete DNA sequence of yeast chromosome II.</title>
        <authorList>
            <person name="Feldmann H."/>
            <person name="Aigle M."/>
            <person name="Aljinovic G."/>
            <person name="Andre B."/>
            <person name="Baclet M.C."/>
            <person name="Barthe C."/>
            <person name="Baur A."/>
            <person name="Becam A.-M."/>
            <person name="Biteau N."/>
            <person name="Boles E."/>
            <person name="Brandt T."/>
            <person name="Brendel M."/>
            <person name="Brueckner M."/>
            <person name="Bussereau F."/>
            <person name="Christiansen C."/>
            <person name="Contreras R."/>
            <person name="Crouzet M."/>
            <person name="Cziepluch C."/>
            <person name="Demolis N."/>
            <person name="Delaveau T."/>
            <person name="Doignon F."/>
            <person name="Domdey H."/>
            <person name="Duesterhus S."/>
            <person name="Dubois E."/>
            <person name="Dujon B."/>
            <person name="El Bakkoury M."/>
            <person name="Entian K.-D."/>
            <person name="Feuermann M."/>
            <person name="Fiers W."/>
            <person name="Fobo G.M."/>
            <person name="Fritz C."/>
            <person name="Gassenhuber J."/>
            <person name="Glansdorff N."/>
            <person name="Goffeau A."/>
            <person name="Grivell L.A."/>
            <person name="de Haan M."/>
            <person name="Hein C."/>
            <person name="Herbert C.J."/>
            <person name="Hollenberg C.P."/>
            <person name="Holmstroem K."/>
            <person name="Jacq C."/>
            <person name="Jacquet M."/>
            <person name="Jauniaux J.-C."/>
            <person name="Jonniaux J.-L."/>
            <person name="Kallesoee T."/>
            <person name="Kiesau P."/>
            <person name="Kirchrath L."/>
            <person name="Koetter P."/>
            <person name="Korol S."/>
            <person name="Liebl S."/>
            <person name="Logghe M."/>
            <person name="Lohan A.J.E."/>
            <person name="Louis E.J."/>
            <person name="Li Z.Y."/>
            <person name="Maat M.J."/>
            <person name="Mallet L."/>
            <person name="Mannhaupt G."/>
            <person name="Messenguy F."/>
            <person name="Miosga T."/>
            <person name="Molemans F."/>
            <person name="Mueller S."/>
            <person name="Nasr F."/>
            <person name="Obermaier B."/>
            <person name="Perea J."/>
            <person name="Pierard A."/>
            <person name="Piravandi E."/>
            <person name="Pohl F.M."/>
            <person name="Pohl T.M."/>
            <person name="Potier S."/>
            <person name="Proft M."/>
            <person name="Purnelle B."/>
            <person name="Ramezani Rad M."/>
            <person name="Rieger M."/>
            <person name="Rose M."/>
            <person name="Schaaff-Gerstenschlaeger I."/>
            <person name="Scherens B."/>
            <person name="Schwarzlose C."/>
            <person name="Skala J."/>
            <person name="Slonimski P.P."/>
            <person name="Smits P.H.M."/>
            <person name="Souciet J.-L."/>
            <person name="Steensma H.Y."/>
            <person name="Stucka R."/>
            <person name="Urrestarazu L.A."/>
            <person name="van der Aart Q.J.M."/>
            <person name="Van Dyck L."/>
            <person name="Vassarotti A."/>
            <person name="Vetter I."/>
            <person name="Vierendeels F."/>
            <person name="Vissers S."/>
            <person name="Wagner G."/>
            <person name="de Wergifosse P."/>
            <person name="Wolfe K.H."/>
            <person name="Zagulski M."/>
            <person name="Zimmermann F.K."/>
            <person name="Mewes H.-W."/>
            <person name="Kleine K."/>
        </authorList>
    </citation>
    <scope>NUCLEOTIDE SEQUENCE [LARGE SCALE GENOMIC DNA]</scope>
    <source>
        <strain>ATCC 204508 / S288c</strain>
    </source>
</reference>
<reference key="4">
    <citation type="journal article" date="2014" name="G3 (Bethesda)">
        <title>The reference genome sequence of Saccharomyces cerevisiae: Then and now.</title>
        <authorList>
            <person name="Engel S.R."/>
            <person name="Dietrich F.S."/>
            <person name="Fisk D.G."/>
            <person name="Binkley G."/>
            <person name="Balakrishnan R."/>
            <person name="Costanzo M.C."/>
            <person name="Dwight S.S."/>
            <person name="Hitz B.C."/>
            <person name="Karra K."/>
            <person name="Nash R.S."/>
            <person name="Weng S."/>
            <person name="Wong E.D."/>
            <person name="Lloyd P."/>
            <person name="Skrzypek M.S."/>
            <person name="Miyasato S.R."/>
            <person name="Simison M."/>
            <person name="Cherry J.M."/>
        </authorList>
    </citation>
    <scope>GENOME REANNOTATION</scope>
    <source>
        <strain>ATCC 204508 / S288c</strain>
    </source>
</reference>
<reference key="5">
    <citation type="journal article" date="2002" name="Nat. Cell Biol.">
        <title>A transmembrane ubiquitin ligase required to sort membrane proteins into multivesicular bodies.</title>
        <authorList>
            <person name="Reggiori F."/>
            <person name="Pelham H.R.B."/>
        </authorList>
    </citation>
    <scope>INTERACTION WITH TUL1</scope>
</reference>
<reference key="6">
    <citation type="journal article" date="2003" name="Nature">
        <title>Global analysis of protein expression in yeast.</title>
        <authorList>
            <person name="Ghaemmaghami S."/>
            <person name="Huh W.-K."/>
            <person name="Bower K."/>
            <person name="Howson R.W."/>
            <person name="Belle A."/>
            <person name="Dephoure N."/>
            <person name="O'Shea E.K."/>
            <person name="Weissman J.S."/>
        </authorList>
    </citation>
    <scope>LEVEL OF PROTEIN EXPRESSION [LARGE SCALE ANALYSIS]</scope>
</reference>
<reference key="7">
    <citation type="journal article" date="2007" name="J. Biol. Chem.">
        <title>A conserved cysteine is essential for Pex4p-dependent ubiquitination of the peroxisomal import receptor Pex5p.</title>
        <authorList>
            <person name="Williams C."/>
            <person name="van den Berg M."/>
            <person name="Sprenger R.R."/>
            <person name="Distel B."/>
        </authorList>
    </citation>
    <scope>FUNCTION</scope>
    <scope>PATHWAY</scope>
</reference>
<reference key="8">
    <citation type="journal article" date="2008" name="Mol. Cell. Proteomics">
        <title>A multidimensional chromatography technology for in-depth phosphoproteome analysis.</title>
        <authorList>
            <person name="Albuquerque C.P."/>
            <person name="Smolka M.B."/>
            <person name="Payne S.H."/>
            <person name="Bafna V."/>
            <person name="Eng J."/>
            <person name="Zhou H."/>
        </authorList>
    </citation>
    <scope>PHOSPHORYLATION [LARGE SCALE ANALYSIS] AT SER-12</scope>
    <scope>IDENTIFICATION BY MASS SPECTROMETRY [LARGE SCALE ANALYSIS]</scope>
</reference>
<reference key="9">
    <citation type="journal article" date="2012" name="Proteomics">
        <title>Sites of ubiquitin attachment in Saccharomyces cerevisiae.</title>
        <authorList>
            <person name="Starita L.M."/>
            <person name="Lo R.S."/>
            <person name="Eng J.K."/>
            <person name="von Haller P.D."/>
            <person name="Fields S."/>
        </authorList>
    </citation>
    <scope>UBIQUITINATION [LARGE SCALE ANALYSIS] AT LYS-91</scope>
    <scope>IDENTIFICATION BY MASS SPECTROMETRY [LARGE SCALE ANALYSIS]</scope>
</reference>
<reference key="10">
    <citation type="journal article" date="2017" name="Nat. Commun.">
        <title>Ubiquitination of stalled ribosome triggers ribosome-associated quality control.</title>
        <authorList>
            <person name="Matsuo Y."/>
            <person name="Ikeuchi K."/>
            <person name="Saeki Y."/>
            <person name="Iwasaki S."/>
            <person name="Schmidt C."/>
            <person name="Udagawa T."/>
            <person name="Sato F."/>
            <person name="Tsuchiya H."/>
            <person name="Becker T."/>
            <person name="Tanaka K."/>
            <person name="Ingolia N.T."/>
            <person name="Beckmann R."/>
            <person name="Inada T."/>
        </authorList>
    </citation>
    <scope>DISRUPTION PHENOTYPE</scope>
</reference>
<reference key="11">
    <citation type="journal article" date="1993" name="Biochemistry">
        <title>Tertiary structures of class I ubiquitin-conjugating enzymes are highly conserved: crystal structure of yeast Ubc4.</title>
        <authorList>
            <person name="Cook W.J."/>
            <person name="Jeffrey L.C."/>
            <person name="Xu Y."/>
            <person name="Chau V."/>
        </authorList>
    </citation>
    <scope>X-RAY CRYSTALLOGRAPHY (2.7 ANGSTROMS)</scope>
</reference>
<sequence>MSSSKRIAKELSDLERDPPTSCSAGPVGDDLYHWQASIMGPADSPYAGGVFFLSIHFPTDYPFKPPKISFTTKIYHPNINANGNICLDILKDQWSPALTLSKVLLSICSLLTDANPDDPLVPEIAHIYKTDRPKYEATAREWTKKYAV</sequence>
<feature type="chain" id="PRO_0000082545" description="Ubiquitin-conjugating enzyme E2 4">
    <location>
        <begin position="1"/>
        <end position="148"/>
    </location>
</feature>
<feature type="domain" description="UBC core" evidence="1">
    <location>
        <begin position="2"/>
        <end position="148"/>
    </location>
</feature>
<feature type="region of interest" description="Disordered" evidence="3">
    <location>
        <begin position="1"/>
        <end position="22"/>
    </location>
</feature>
<feature type="compositionally biased region" description="Basic and acidic residues" evidence="3">
    <location>
        <begin position="7"/>
        <end position="18"/>
    </location>
</feature>
<feature type="active site" description="Glycyl thioester intermediate" evidence="1">
    <location>
        <position position="86"/>
    </location>
</feature>
<feature type="modified residue" description="Phosphoserine" evidence="11">
    <location>
        <position position="12"/>
    </location>
</feature>
<feature type="cross-link" description="Glycyl lysine isopeptide (Lys-Gly) (interchain with G-Cter in ubiquitin)" evidence="12">
    <location>
        <position position="91"/>
    </location>
</feature>
<feature type="helix" evidence="13">
    <location>
        <begin position="2"/>
        <end position="14"/>
    </location>
</feature>
<feature type="strand" evidence="13">
    <location>
        <begin position="20"/>
        <end position="27"/>
    </location>
</feature>
<feature type="strand" evidence="13">
    <location>
        <begin position="30"/>
        <end position="40"/>
    </location>
</feature>
<feature type="strand" evidence="14">
    <location>
        <begin position="42"/>
        <end position="44"/>
    </location>
</feature>
<feature type="turn" evidence="14">
    <location>
        <begin position="45"/>
        <end position="48"/>
    </location>
</feature>
<feature type="strand" evidence="13">
    <location>
        <begin position="50"/>
        <end position="56"/>
    </location>
</feature>
<feature type="turn" evidence="13">
    <location>
        <begin position="59"/>
        <end position="62"/>
    </location>
</feature>
<feature type="strand" evidence="13">
    <location>
        <begin position="67"/>
        <end position="70"/>
    </location>
</feature>
<feature type="helix" evidence="13">
    <location>
        <begin position="88"/>
        <end position="90"/>
    </location>
</feature>
<feature type="turn" evidence="13">
    <location>
        <begin position="91"/>
        <end position="93"/>
    </location>
</feature>
<feature type="helix" evidence="13">
    <location>
        <begin position="100"/>
        <end position="112"/>
    </location>
</feature>
<feature type="helix" evidence="13">
    <location>
        <begin position="122"/>
        <end position="130"/>
    </location>
</feature>
<feature type="helix" evidence="13">
    <location>
        <begin position="132"/>
        <end position="146"/>
    </location>
</feature>